<sequence>MSEAIIAKKAEQVELIAEKMKAAASIVIVDSRGLTVDQDTVLRRSLRESGVEFKVIKNSILTRAAEKAGLDELKDVFVGPSAVAFSNEDVIAPAKVINDFTKTADALEIKGGAIEGAVSSKEEIQALATLPNREGMLSMLLSVLQAPVRNVAYAVKAVAENKEGAA</sequence>
<gene>
    <name type="primary">rplJ</name>
    <name type="ordered locus">SPy_1072</name>
    <name type="ordered locus">M5005_Spy0795</name>
</gene>
<evidence type="ECO:0000250" key="1"/>
<evidence type="ECO:0000305" key="2"/>
<dbReference type="EMBL" id="AE004092">
    <property type="protein sequence ID" value="AAK33959.1"/>
    <property type="molecule type" value="Genomic_DNA"/>
</dbReference>
<dbReference type="EMBL" id="CP000017">
    <property type="protein sequence ID" value="AAZ51413.1"/>
    <property type="status" value="ALT_INIT"/>
    <property type="molecule type" value="Genomic_DNA"/>
</dbReference>
<dbReference type="RefSeq" id="NP_269238.1">
    <property type="nucleotide sequence ID" value="NC_002737.2"/>
</dbReference>
<dbReference type="SMR" id="P68900"/>
<dbReference type="PaxDb" id="1314-HKU360_00860"/>
<dbReference type="KEGG" id="spy:SPy_1072"/>
<dbReference type="KEGG" id="spz:M5005_Spy0795"/>
<dbReference type="PATRIC" id="fig|160490.10.peg.927"/>
<dbReference type="HOGENOM" id="CLU_092227_2_0_9"/>
<dbReference type="OMA" id="VRDQKQA"/>
<dbReference type="PRO" id="PR:P68900"/>
<dbReference type="Proteomes" id="UP000000750">
    <property type="component" value="Chromosome"/>
</dbReference>
<dbReference type="GO" id="GO:0015934">
    <property type="term" value="C:large ribosomal subunit"/>
    <property type="evidence" value="ECO:0007669"/>
    <property type="project" value="InterPro"/>
</dbReference>
<dbReference type="GO" id="GO:0070180">
    <property type="term" value="F:large ribosomal subunit rRNA binding"/>
    <property type="evidence" value="ECO:0007669"/>
    <property type="project" value="UniProtKB-UniRule"/>
</dbReference>
<dbReference type="GO" id="GO:0003735">
    <property type="term" value="F:structural constituent of ribosome"/>
    <property type="evidence" value="ECO:0007669"/>
    <property type="project" value="InterPro"/>
</dbReference>
<dbReference type="GO" id="GO:0006412">
    <property type="term" value="P:translation"/>
    <property type="evidence" value="ECO:0007669"/>
    <property type="project" value="UniProtKB-UniRule"/>
</dbReference>
<dbReference type="CDD" id="cd05797">
    <property type="entry name" value="Ribosomal_L10"/>
    <property type="match status" value="1"/>
</dbReference>
<dbReference type="FunFam" id="3.30.70.1730:FF:000001">
    <property type="entry name" value="50S ribosomal protein L10"/>
    <property type="match status" value="1"/>
</dbReference>
<dbReference type="Gene3D" id="3.30.70.1730">
    <property type="match status" value="1"/>
</dbReference>
<dbReference type="HAMAP" id="MF_00362">
    <property type="entry name" value="Ribosomal_uL10"/>
    <property type="match status" value="1"/>
</dbReference>
<dbReference type="InterPro" id="IPR001790">
    <property type="entry name" value="Ribosomal_uL10"/>
</dbReference>
<dbReference type="InterPro" id="IPR043141">
    <property type="entry name" value="Ribosomal_uL10-like_sf"/>
</dbReference>
<dbReference type="InterPro" id="IPR022973">
    <property type="entry name" value="Ribosomal_uL10_bac"/>
</dbReference>
<dbReference type="InterPro" id="IPR047865">
    <property type="entry name" value="Ribosomal_uL10_bac_type"/>
</dbReference>
<dbReference type="InterPro" id="IPR002363">
    <property type="entry name" value="Ribosomal_uL10_CS_bac"/>
</dbReference>
<dbReference type="NCBIfam" id="NF000955">
    <property type="entry name" value="PRK00099.1-1"/>
    <property type="match status" value="1"/>
</dbReference>
<dbReference type="PANTHER" id="PTHR11560">
    <property type="entry name" value="39S RIBOSOMAL PROTEIN L10, MITOCHONDRIAL"/>
    <property type="match status" value="1"/>
</dbReference>
<dbReference type="Pfam" id="PF00466">
    <property type="entry name" value="Ribosomal_L10"/>
    <property type="match status" value="1"/>
</dbReference>
<dbReference type="SUPFAM" id="SSF160369">
    <property type="entry name" value="Ribosomal protein L10-like"/>
    <property type="match status" value="1"/>
</dbReference>
<dbReference type="PROSITE" id="PS01109">
    <property type="entry name" value="RIBOSOMAL_L10"/>
    <property type="match status" value="1"/>
</dbReference>
<name>RL10_STRP1</name>
<feature type="initiator methionine" description="Removed" evidence="1">
    <location>
        <position position="1"/>
    </location>
</feature>
<feature type="chain" id="PRO_0000154724" description="Large ribosomal subunit protein uL10">
    <location>
        <begin position="2"/>
        <end position="166"/>
    </location>
</feature>
<organism>
    <name type="scientific">Streptococcus pyogenes serotype M1</name>
    <dbReference type="NCBI Taxonomy" id="301447"/>
    <lineage>
        <taxon>Bacteria</taxon>
        <taxon>Bacillati</taxon>
        <taxon>Bacillota</taxon>
        <taxon>Bacilli</taxon>
        <taxon>Lactobacillales</taxon>
        <taxon>Streptococcaceae</taxon>
        <taxon>Streptococcus</taxon>
    </lineage>
</organism>
<keyword id="KW-1185">Reference proteome</keyword>
<keyword id="KW-0687">Ribonucleoprotein</keyword>
<keyword id="KW-0689">Ribosomal protein</keyword>
<keyword id="KW-0694">RNA-binding</keyword>
<keyword id="KW-0699">rRNA-binding</keyword>
<reference key="1">
    <citation type="journal article" date="2001" name="Proc. Natl. Acad. Sci. U.S.A.">
        <title>Complete genome sequence of an M1 strain of Streptococcus pyogenes.</title>
        <authorList>
            <person name="Ferretti J.J."/>
            <person name="McShan W.M."/>
            <person name="Ajdic D.J."/>
            <person name="Savic D.J."/>
            <person name="Savic G."/>
            <person name="Lyon K."/>
            <person name="Primeaux C."/>
            <person name="Sezate S."/>
            <person name="Suvorov A.N."/>
            <person name="Kenton S."/>
            <person name="Lai H.S."/>
            <person name="Lin S.P."/>
            <person name="Qian Y."/>
            <person name="Jia H.G."/>
            <person name="Najar F.Z."/>
            <person name="Ren Q."/>
            <person name="Zhu H."/>
            <person name="Song L."/>
            <person name="White J."/>
            <person name="Yuan X."/>
            <person name="Clifton S.W."/>
            <person name="Roe B.A."/>
            <person name="McLaughlin R.E."/>
        </authorList>
    </citation>
    <scope>NUCLEOTIDE SEQUENCE [LARGE SCALE GENOMIC DNA]</scope>
    <source>
        <strain>ATCC 700294 / SF370 / Serotype M1</strain>
    </source>
</reference>
<reference key="2">
    <citation type="journal article" date="2005" name="J. Infect. Dis.">
        <title>Evolutionary origin and emergence of a highly successful clone of serotype M1 group A Streptococcus involved multiple horizontal gene transfer events.</title>
        <authorList>
            <person name="Sumby P."/>
            <person name="Porcella S.F."/>
            <person name="Madrigal A.G."/>
            <person name="Barbian K.D."/>
            <person name="Virtaneva K."/>
            <person name="Ricklefs S.M."/>
            <person name="Sturdevant D.E."/>
            <person name="Graham M.R."/>
            <person name="Vuopio-Varkila J."/>
            <person name="Hoe N.P."/>
            <person name="Musser J.M."/>
        </authorList>
    </citation>
    <scope>NUCLEOTIDE SEQUENCE [LARGE SCALE GENOMIC DNA]</scope>
    <source>
        <strain>ATCC BAA-947 / MGAS5005 / Serotype M1</strain>
    </source>
</reference>
<accession>P68900</accession>
<accession>P82480</accession>
<accession>Q48Z05</accession>
<proteinExistence type="inferred from homology"/>
<comment type="function">
    <text evidence="1">Forms part of the ribosomal stalk, playing a central role in the interaction of the ribosome with GTP-bound translation factors.</text>
</comment>
<comment type="subunit">
    <text evidence="1">Part of the ribosomal stalk of the 50S ribosomal subunit. The N-terminus interacts with L11 and the large rRNA to form the base of the stalk. The C-terminus forms an elongated spine to which L12 dimers bind in a sequential fashion forming a multimeric L10(L12)X complex (By similarity).</text>
</comment>
<comment type="similarity">
    <text evidence="2">Belongs to the universal ribosomal protein uL10 family.</text>
</comment>
<comment type="sequence caution" evidence="2">
    <conflict type="erroneous initiation">
        <sequence resource="EMBL-CDS" id="AAZ51413"/>
    </conflict>
</comment>
<protein>
    <recommendedName>
        <fullName evidence="2">Large ribosomal subunit protein uL10</fullName>
    </recommendedName>
    <alternativeName>
        <fullName>50S ribosomal protein L10</fullName>
    </alternativeName>
</protein>